<protein>
    <recommendedName>
        <fullName>Ubiquitin carboxyl-terminal hydrolase MINDY-2</fullName>
        <ecNumber>3.4.19.12</ecNumber>
    </recommendedName>
    <alternativeName>
        <fullName>Deubiquitinating enzyme MINDY-2</fullName>
    </alternativeName>
    <alternativeName>
        <fullName>Protein FAM63B</fullName>
    </alternativeName>
</protein>
<keyword id="KW-0025">Alternative splicing</keyword>
<keyword id="KW-0378">Hydrolase</keyword>
<keyword id="KW-0597">Phosphoprotein</keyword>
<keyword id="KW-0645">Protease</keyword>
<keyword id="KW-1185">Reference proteome</keyword>
<keyword id="KW-0788">Thiol protease</keyword>
<keyword id="KW-0833">Ubl conjugation pathway</keyword>
<sequence length="601" mass="65637">MENSPDSPQPLELGVAAGRVSPPEGRRRGGREAEDGPAGRAVDSGGQGAAAAAARSSLGDPTSPSQLGCGAGSDLKDGASSSPAASEVPSRGQHKVTASPELAEAAAGRGSGPVGDTGTCRVEQAAEEPSSTGAPSSSCSEPSPPGDSPSLDSLESFSNLHSFPSSSEFNSEEGAETRVPEDVEEGAAGPPRAAPLCKEEEEDPAQVLAASKERFPGQSVYHIKWIQWKEENTPIITQNENGPCPLLAILNVLLLAWKVKLPPMMEIITAEQLMEYLGDYMLEAKPKEISEIQRVNYEQNMSDAMAILHKLQTGLDVNVRFTGVRVFEYTPECIVFDLLDIPLYHGWLVDPQIDDIVKAVGNCSYNQLVEKIISCKQSDNSQLVSEGFVAEQFLNNTATQLTYHGLCELTSTVQEGELCVFFRNNHFSTMTKYKGQLYLLVTDQGFLTEEKIVWESLHNVDGDGNFCDSEFHLRPPSDPETVYKGQQDQIDQDYLMALSLQQEQQSQEINWEQIPEGISDLELAKKLQEEEDRRASQYYQEQEQAQAVVTTTTPSTQAQQGQPAQASPSSIKQPGNSERKRKEPREKDKEKEKEKNSCVIL</sequence>
<gene>
    <name type="primary">Mindy2</name>
    <name type="synonym">Fam63b</name>
    <name type="synonym">Kiaa1164</name>
</gene>
<feature type="chain" id="PRO_0000344043" description="Ubiquitin carboxyl-terminal hydrolase MINDY-2">
    <location>
        <begin position="1"/>
        <end position="601"/>
    </location>
</feature>
<feature type="region of interest" description="Disordered" evidence="3">
    <location>
        <begin position="1"/>
        <end position="205"/>
    </location>
</feature>
<feature type="region of interest" description="Ubiquitin-binding domain (UBD)" evidence="2">
    <location>
        <begin position="485"/>
        <end position="537"/>
    </location>
</feature>
<feature type="region of interest" description="Disordered" evidence="3">
    <location>
        <begin position="534"/>
        <end position="601"/>
    </location>
</feature>
<feature type="compositionally biased region" description="Basic and acidic residues" evidence="3">
    <location>
        <begin position="24"/>
        <end position="34"/>
    </location>
</feature>
<feature type="compositionally biased region" description="Low complexity" evidence="3">
    <location>
        <begin position="127"/>
        <end position="141"/>
    </location>
</feature>
<feature type="compositionally biased region" description="Low complexity" evidence="3">
    <location>
        <begin position="148"/>
        <end position="169"/>
    </location>
</feature>
<feature type="compositionally biased region" description="Low complexity" evidence="3">
    <location>
        <begin position="186"/>
        <end position="195"/>
    </location>
</feature>
<feature type="compositionally biased region" description="Low complexity" evidence="3">
    <location>
        <begin position="536"/>
        <end position="570"/>
    </location>
</feature>
<feature type="compositionally biased region" description="Basic and acidic residues" evidence="3">
    <location>
        <begin position="577"/>
        <end position="601"/>
    </location>
</feature>
<feature type="active site" description="Nucleophile" evidence="1">
    <location>
        <position position="244"/>
    </location>
</feature>
<feature type="active site" description="Proton acceptor" evidence="1">
    <location>
        <position position="426"/>
    </location>
</feature>
<feature type="site" description="Ubiquitin-binding" evidence="1">
    <location>
        <position position="520"/>
    </location>
</feature>
<feature type="site" description="Ubiquitin-binding" evidence="1">
    <location>
        <begin position="523"/>
        <end position="524"/>
    </location>
</feature>
<feature type="site" description="Ubiquitin-binding" evidence="1">
    <location>
        <position position="527"/>
    </location>
</feature>
<feature type="modified residue" description="Phosphothreonine" evidence="6">
    <location>
        <position position="62"/>
    </location>
</feature>
<feature type="modified residue" description="Phosphoserine" evidence="2">
    <location>
        <position position="82"/>
    </location>
</feature>
<feature type="splice variant" id="VSP_034720" description="In isoform 2." evidence="4">
    <location>
        <begin position="1"/>
        <end position="263"/>
    </location>
</feature>
<feature type="splice variant" id="VSP_034721" description="In isoform 3." evidence="4">
    <original>F</original>
    <variation>R</variation>
    <location>
        <position position="388"/>
    </location>
</feature>
<feature type="splice variant" id="VSP_034722" description="In isoform 3." evidence="4">
    <location>
        <begin position="389"/>
        <end position="601"/>
    </location>
</feature>
<feature type="sequence conflict" description="In Ref. 2; AAH55816." evidence="5" ref="2">
    <original>G</original>
    <variation>S</variation>
    <location>
        <position position="78"/>
    </location>
</feature>
<feature type="sequence conflict" description="In Ref. 2; AAH55816." evidence="5" ref="2">
    <original>A</original>
    <variation>T</variation>
    <location>
        <position position="107"/>
    </location>
</feature>
<feature type="sequence conflict" description="In Ref. 2; AAH69845 and 3; BAD90344." evidence="5" ref="2 3">
    <original>L</original>
    <variation>F</variation>
    <location>
        <position position="261"/>
    </location>
</feature>
<feature type="sequence conflict" description="In Ref. 1; BAC29246." evidence="5" ref="1">
    <original>E</original>
    <variation>G</variation>
    <location>
        <position position="522"/>
    </location>
</feature>
<comment type="function">
    <text evidence="2">Hydrolase that can remove 'Lys-48'-linked conjugated ubiquitin from proteins. Can also bind to polyubiquitin chains of different linkage types, including 'Lys-6', 'Lys-11', 'Lys-29', 'Lys-33' and 'Lys-63'. May play a regulatory role at the level of protein turnover.</text>
</comment>
<comment type="catalytic activity">
    <reaction evidence="2">
        <text>Thiol-dependent hydrolysis of ester, thioester, amide, peptide and isopeptide bonds formed by the C-terminal Gly of ubiquitin (a 76-residue protein attached to proteins as an intracellular targeting signal).</text>
        <dbReference type="EC" id="3.4.19.12"/>
    </reaction>
</comment>
<comment type="alternative products">
    <event type="alternative splicing"/>
    <isoform>
        <id>Q6PDI6-1</id>
        <name>1</name>
        <sequence type="displayed"/>
    </isoform>
    <isoform>
        <id>Q6PDI6-2</id>
        <name>2</name>
        <sequence type="described" ref="VSP_034720"/>
    </isoform>
    <isoform>
        <id>Q6PDI6-3</id>
        <name>3</name>
        <sequence type="described" ref="VSP_034721 VSP_034722"/>
    </isoform>
</comment>
<comment type="similarity">
    <text evidence="5">Belongs to the MINDY deubiquitinase family. FAM63 subfamily.</text>
</comment>
<comment type="sequence caution" evidence="5">
    <conflict type="miscellaneous discrepancy">
        <sequence resource="EMBL-CDS" id="AAH69845"/>
    </conflict>
    <text>Contaminating sequence. Potential poly-A sequence.</text>
</comment>
<comment type="sequence caution" evidence="5">
    <conflict type="frameshift">
        <sequence resource="EMBL-CDS" id="BAC32709"/>
    </conflict>
</comment>
<comment type="sequence caution" evidence="5">
    <conflict type="erroneous initiation">
        <sequence resource="EMBL-CDS" id="BAD90344"/>
    </conflict>
</comment>
<name>MINY2_MOUSE</name>
<reference key="1">
    <citation type="journal article" date="2005" name="Science">
        <title>The transcriptional landscape of the mammalian genome.</title>
        <authorList>
            <person name="Carninci P."/>
            <person name="Kasukawa T."/>
            <person name="Katayama S."/>
            <person name="Gough J."/>
            <person name="Frith M.C."/>
            <person name="Maeda N."/>
            <person name="Oyama R."/>
            <person name="Ravasi T."/>
            <person name="Lenhard B."/>
            <person name="Wells C."/>
            <person name="Kodzius R."/>
            <person name="Shimokawa K."/>
            <person name="Bajic V.B."/>
            <person name="Brenner S.E."/>
            <person name="Batalov S."/>
            <person name="Forrest A.R."/>
            <person name="Zavolan M."/>
            <person name="Davis M.J."/>
            <person name="Wilming L.G."/>
            <person name="Aidinis V."/>
            <person name="Allen J.E."/>
            <person name="Ambesi-Impiombato A."/>
            <person name="Apweiler R."/>
            <person name="Aturaliya R.N."/>
            <person name="Bailey T.L."/>
            <person name="Bansal M."/>
            <person name="Baxter L."/>
            <person name="Beisel K.W."/>
            <person name="Bersano T."/>
            <person name="Bono H."/>
            <person name="Chalk A.M."/>
            <person name="Chiu K.P."/>
            <person name="Choudhary V."/>
            <person name="Christoffels A."/>
            <person name="Clutterbuck D.R."/>
            <person name="Crowe M.L."/>
            <person name="Dalla E."/>
            <person name="Dalrymple B.P."/>
            <person name="de Bono B."/>
            <person name="Della Gatta G."/>
            <person name="di Bernardo D."/>
            <person name="Down T."/>
            <person name="Engstrom P."/>
            <person name="Fagiolini M."/>
            <person name="Faulkner G."/>
            <person name="Fletcher C.F."/>
            <person name="Fukushima T."/>
            <person name="Furuno M."/>
            <person name="Futaki S."/>
            <person name="Gariboldi M."/>
            <person name="Georgii-Hemming P."/>
            <person name="Gingeras T.R."/>
            <person name="Gojobori T."/>
            <person name="Green R.E."/>
            <person name="Gustincich S."/>
            <person name="Harbers M."/>
            <person name="Hayashi Y."/>
            <person name="Hensch T.K."/>
            <person name="Hirokawa N."/>
            <person name="Hill D."/>
            <person name="Huminiecki L."/>
            <person name="Iacono M."/>
            <person name="Ikeo K."/>
            <person name="Iwama A."/>
            <person name="Ishikawa T."/>
            <person name="Jakt M."/>
            <person name="Kanapin A."/>
            <person name="Katoh M."/>
            <person name="Kawasawa Y."/>
            <person name="Kelso J."/>
            <person name="Kitamura H."/>
            <person name="Kitano H."/>
            <person name="Kollias G."/>
            <person name="Krishnan S.P."/>
            <person name="Kruger A."/>
            <person name="Kummerfeld S.K."/>
            <person name="Kurochkin I.V."/>
            <person name="Lareau L.F."/>
            <person name="Lazarevic D."/>
            <person name="Lipovich L."/>
            <person name="Liu J."/>
            <person name="Liuni S."/>
            <person name="McWilliam S."/>
            <person name="Madan Babu M."/>
            <person name="Madera M."/>
            <person name="Marchionni L."/>
            <person name="Matsuda H."/>
            <person name="Matsuzawa S."/>
            <person name="Miki H."/>
            <person name="Mignone F."/>
            <person name="Miyake S."/>
            <person name="Morris K."/>
            <person name="Mottagui-Tabar S."/>
            <person name="Mulder N."/>
            <person name="Nakano N."/>
            <person name="Nakauchi H."/>
            <person name="Ng P."/>
            <person name="Nilsson R."/>
            <person name="Nishiguchi S."/>
            <person name="Nishikawa S."/>
            <person name="Nori F."/>
            <person name="Ohara O."/>
            <person name="Okazaki Y."/>
            <person name="Orlando V."/>
            <person name="Pang K.C."/>
            <person name="Pavan W.J."/>
            <person name="Pavesi G."/>
            <person name="Pesole G."/>
            <person name="Petrovsky N."/>
            <person name="Piazza S."/>
            <person name="Reed J."/>
            <person name="Reid J.F."/>
            <person name="Ring B.Z."/>
            <person name="Ringwald M."/>
            <person name="Rost B."/>
            <person name="Ruan Y."/>
            <person name="Salzberg S.L."/>
            <person name="Sandelin A."/>
            <person name="Schneider C."/>
            <person name="Schoenbach C."/>
            <person name="Sekiguchi K."/>
            <person name="Semple C.A."/>
            <person name="Seno S."/>
            <person name="Sessa L."/>
            <person name="Sheng Y."/>
            <person name="Shibata Y."/>
            <person name="Shimada H."/>
            <person name="Shimada K."/>
            <person name="Silva D."/>
            <person name="Sinclair B."/>
            <person name="Sperling S."/>
            <person name="Stupka E."/>
            <person name="Sugiura K."/>
            <person name="Sultana R."/>
            <person name="Takenaka Y."/>
            <person name="Taki K."/>
            <person name="Tammoja K."/>
            <person name="Tan S.L."/>
            <person name="Tang S."/>
            <person name="Taylor M.S."/>
            <person name="Tegner J."/>
            <person name="Teichmann S.A."/>
            <person name="Ueda H.R."/>
            <person name="van Nimwegen E."/>
            <person name="Verardo R."/>
            <person name="Wei C.L."/>
            <person name="Yagi K."/>
            <person name="Yamanishi H."/>
            <person name="Zabarovsky E."/>
            <person name="Zhu S."/>
            <person name="Zimmer A."/>
            <person name="Hide W."/>
            <person name="Bult C."/>
            <person name="Grimmond S.M."/>
            <person name="Teasdale R.D."/>
            <person name="Liu E.T."/>
            <person name="Brusic V."/>
            <person name="Quackenbush J."/>
            <person name="Wahlestedt C."/>
            <person name="Mattick J.S."/>
            <person name="Hume D.A."/>
            <person name="Kai C."/>
            <person name="Sasaki D."/>
            <person name="Tomaru Y."/>
            <person name="Fukuda S."/>
            <person name="Kanamori-Katayama M."/>
            <person name="Suzuki M."/>
            <person name="Aoki J."/>
            <person name="Arakawa T."/>
            <person name="Iida J."/>
            <person name="Imamura K."/>
            <person name="Itoh M."/>
            <person name="Kato T."/>
            <person name="Kawaji H."/>
            <person name="Kawagashira N."/>
            <person name="Kawashima T."/>
            <person name="Kojima M."/>
            <person name="Kondo S."/>
            <person name="Konno H."/>
            <person name="Nakano K."/>
            <person name="Ninomiya N."/>
            <person name="Nishio T."/>
            <person name="Okada M."/>
            <person name="Plessy C."/>
            <person name="Shibata K."/>
            <person name="Shiraki T."/>
            <person name="Suzuki S."/>
            <person name="Tagami M."/>
            <person name="Waki K."/>
            <person name="Watahiki A."/>
            <person name="Okamura-Oho Y."/>
            <person name="Suzuki H."/>
            <person name="Kawai J."/>
            <person name="Hayashizaki Y."/>
        </authorList>
    </citation>
    <scope>NUCLEOTIDE SEQUENCE [LARGE SCALE MRNA] (ISOFORMS 2 AND 3)</scope>
    <scope>NUCLEOTIDE SEQUENCE [LARGE SCALE MRNA] OF 1-589 (ISOFORM 1)</scope>
    <source>
        <strain>C57BL/6J</strain>
        <tissue>Adipose tissue</tissue>
        <tissue>Cerebellum</tissue>
        <tissue>Corpora quadrigemina</tissue>
    </source>
</reference>
<reference key="2">
    <citation type="journal article" date="2004" name="Genome Res.">
        <title>The status, quality, and expansion of the NIH full-length cDNA project: the Mammalian Gene Collection (MGC).</title>
        <authorList>
            <consortium name="The MGC Project Team"/>
        </authorList>
    </citation>
    <scope>NUCLEOTIDE SEQUENCE [LARGE SCALE MRNA] (ISOFORM 1)</scope>
    <source>
        <strain>C57BL/6J</strain>
        <strain>Czech II</strain>
        <strain>FVB/N</strain>
        <tissue>Brain</tissue>
        <tissue>Mammary tumor</tissue>
    </source>
</reference>
<reference key="3">
    <citation type="submission" date="2005-02" db="EMBL/GenBank/DDBJ databases">
        <title>Prediction of the coding sequences of mouse homologues of KIAA gene. The complete nucleotide sequences of mouse KIAA-homologous cDNAs identified by screening of terminal sequences of cDNA clones randomly sampled from size-fractionated libraries.</title>
        <authorList>
            <person name="Okazaki N."/>
            <person name="Kikuno R.F."/>
            <person name="Ohara R."/>
            <person name="Inamoto S."/>
            <person name="Nagase T."/>
            <person name="Ohara O."/>
            <person name="Koga H."/>
        </authorList>
    </citation>
    <scope>NUCLEOTIDE SEQUENCE [LARGE SCALE MRNA] OF 1-590 (ISOFORM 1)</scope>
    <source>
        <tissue>Embryonic tail</tissue>
    </source>
</reference>
<reference key="4">
    <citation type="journal article" date="2010" name="Cell">
        <title>A tissue-specific atlas of mouse protein phosphorylation and expression.</title>
        <authorList>
            <person name="Huttlin E.L."/>
            <person name="Jedrychowski M.P."/>
            <person name="Elias J.E."/>
            <person name="Goswami T."/>
            <person name="Rad R."/>
            <person name="Beausoleil S.A."/>
            <person name="Villen J."/>
            <person name="Haas W."/>
            <person name="Sowa M.E."/>
            <person name="Gygi S.P."/>
        </authorList>
    </citation>
    <scope>PHOSPHORYLATION [LARGE SCALE ANALYSIS] AT THR-62</scope>
    <scope>IDENTIFICATION BY MASS SPECTROMETRY [LARGE SCALE ANALYSIS]</scope>
    <source>
        <tissue>Brain</tissue>
        <tissue>Brown adipose tissue</tissue>
        <tissue>Heart</tissue>
        <tissue>Kidney</tissue>
        <tissue>Lung</tissue>
        <tissue>Pancreas</tissue>
        <tissue>Spleen</tissue>
    </source>
</reference>
<accession>Q6PDI6</accession>
<accession>Q571N1</accession>
<accession>Q6NSV8</accession>
<accession>Q7TML6</accession>
<accession>Q8BK25</accession>
<accession>Q8BL22</accession>
<accession>Q8BL47</accession>
<accession>Q8BZC1</accession>
<dbReference type="EC" id="3.4.19.12"/>
<dbReference type="EMBL" id="AK035930">
    <property type="protein sequence ID" value="BAC29246.1"/>
    <property type="molecule type" value="mRNA"/>
</dbReference>
<dbReference type="EMBL" id="AK046403">
    <property type="protein sequence ID" value="BAC32709.1"/>
    <property type="status" value="ALT_FRAME"/>
    <property type="molecule type" value="mRNA"/>
</dbReference>
<dbReference type="EMBL" id="AK046623">
    <property type="protein sequence ID" value="BAC32810.1"/>
    <property type="molecule type" value="mRNA"/>
</dbReference>
<dbReference type="EMBL" id="AK077470">
    <property type="protein sequence ID" value="BAC36815.1"/>
    <property type="molecule type" value="mRNA"/>
</dbReference>
<dbReference type="EMBL" id="BC055816">
    <property type="protein sequence ID" value="AAH55816.1"/>
    <property type="molecule type" value="mRNA"/>
</dbReference>
<dbReference type="EMBL" id="BC058683">
    <property type="protein sequence ID" value="AAH58683.1"/>
    <property type="molecule type" value="mRNA"/>
</dbReference>
<dbReference type="EMBL" id="BC069845">
    <property type="protein sequence ID" value="AAH69845.1"/>
    <property type="status" value="ALT_SEQ"/>
    <property type="molecule type" value="mRNA"/>
</dbReference>
<dbReference type="EMBL" id="AK220158">
    <property type="protein sequence ID" value="BAD90344.1"/>
    <property type="status" value="ALT_INIT"/>
    <property type="molecule type" value="mRNA"/>
</dbReference>
<dbReference type="CCDS" id="CCDS40681.1">
    <molecule id="Q6PDI6-1"/>
</dbReference>
<dbReference type="RefSeq" id="NP_766360.2">
    <molecule id="Q6PDI6-1"/>
    <property type="nucleotide sequence ID" value="NM_172772.2"/>
</dbReference>
<dbReference type="SMR" id="Q6PDI6"/>
<dbReference type="FunCoup" id="Q6PDI6">
    <property type="interactions" value="2404"/>
</dbReference>
<dbReference type="STRING" id="10090.ENSMUSP00000037035"/>
<dbReference type="iPTMnet" id="Q6PDI6"/>
<dbReference type="PhosphoSitePlus" id="Q6PDI6"/>
<dbReference type="jPOST" id="Q6PDI6"/>
<dbReference type="PaxDb" id="10090-ENSMUSP00000037035"/>
<dbReference type="PeptideAtlas" id="Q6PDI6"/>
<dbReference type="ProteomicsDB" id="290248">
    <molecule id="Q6PDI6-1"/>
</dbReference>
<dbReference type="ProteomicsDB" id="290249">
    <molecule id="Q6PDI6-2"/>
</dbReference>
<dbReference type="ProteomicsDB" id="290250">
    <molecule id="Q6PDI6-3"/>
</dbReference>
<dbReference type="Pumba" id="Q6PDI6"/>
<dbReference type="Antibodypedia" id="63975">
    <property type="antibodies" value="60 antibodies from 12 providers"/>
</dbReference>
<dbReference type="Ensembl" id="ENSMUST00000049031.6">
    <molecule id="Q6PDI6-1"/>
    <property type="protein sequence ID" value="ENSMUSP00000037035.6"/>
    <property type="gene ID" value="ENSMUSG00000042444.11"/>
</dbReference>
<dbReference type="GeneID" id="235461"/>
<dbReference type="KEGG" id="mmu:235461"/>
<dbReference type="UCSC" id="uc009qon.1">
    <molecule id="Q6PDI6-1"/>
    <property type="organism name" value="mouse"/>
</dbReference>
<dbReference type="UCSC" id="uc009qoq.1">
    <molecule id="Q6PDI6-3"/>
    <property type="organism name" value="mouse"/>
</dbReference>
<dbReference type="AGR" id="MGI:2443086"/>
<dbReference type="CTD" id="54629"/>
<dbReference type="MGI" id="MGI:2443086">
    <property type="gene designation" value="Mindy2"/>
</dbReference>
<dbReference type="VEuPathDB" id="HostDB:ENSMUSG00000042444"/>
<dbReference type="eggNOG" id="KOG2427">
    <property type="taxonomic scope" value="Eukaryota"/>
</dbReference>
<dbReference type="GeneTree" id="ENSGT00390000016607"/>
<dbReference type="HOGENOM" id="CLU_022566_3_1_1"/>
<dbReference type="InParanoid" id="Q6PDI6"/>
<dbReference type="OMA" id="WKTENTP"/>
<dbReference type="OrthoDB" id="10261212at2759"/>
<dbReference type="PhylomeDB" id="Q6PDI6"/>
<dbReference type="TreeFam" id="TF314589"/>
<dbReference type="BioGRID-ORCS" id="235461">
    <property type="hits" value="3 hits in 80 CRISPR screens"/>
</dbReference>
<dbReference type="ChiTaRS" id="Mindy2">
    <property type="organism name" value="mouse"/>
</dbReference>
<dbReference type="PRO" id="PR:Q6PDI6"/>
<dbReference type="Proteomes" id="UP000000589">
    <property type="component" value="Chromosome 9"/>
</dbReference>
<dbReference type="RNAct" id="Q6PDI6">
    <property type="molecule type" value="protein"/>
</dbReference>
<dbReference type="Bgee" id="ENSMUSG00000042444">
    <property type="expression patterns" value="Expressed in cerebellar vermis and 233 other cell types or tissues"/>
</dbReference>
<dbReference type="ExpressionAtlas" id="Q6PDI6">
    <property type="expression patterns" value="baseline and differential"/>
</dbReference>
<dbReference type="GO" id="GO:0005654">
    <property type="term" value="C:nucleoplasm"/>
    <property type="evidence" value="ECO:0007669"/>
    <property type="project" value="Ensembl"/>
</dbReference>
<dbReference type="GO" id="GO:0016807">
    <property type="term" value="F:cysteine-type carboxypeptidase activity"/>
    <property type="evidence" value="ECO:0007669"/>
    <property type="project" value="Ensembl"/>
</dbReference>
<dbReference type="GO" id="GO:0004843">
    <property type="term" value="F:cysteine-type deubiquitinase activity"/>
    <property type="evidence" value="ECO:0007669"/>
    <property type="project" value="UniProtKB-EC"/>
</dbReference>
<dbReference type="GO" id="GO:0071795">
    <property type="term" value="F:K11-linked polyubiquitin modification-dependent protein binding"/>
    <property type="evidence" value="ECO:0000250"/>
    <property type="project" value="UniProtKB"/>
</dbReference>
<dbReference type="GO" id="GO:1990380">
    <property type="term" value="F:K48-linked deubiquitinase activity"/>
    <property type="evidence" value="ECO:0007669"/>
    <property type="project" value="Ensembl"/>
</dbReference>
<dbReference type="GO" id="GO:0036435">
    <property type="term" value="F:K48-linked polyubiquitin modification-dependent protein binding"/>
    <property type="evidence" value="ECO:0000250"/>
    <property type="project" value="UniProtKB"/>
</dbReference>
<dbReference type="GO" id="GO:0071796">
    <property type="term" value="F:K6-linked polyubiquitin modification-dependent protein binding"/>
    <property type="evidence" value="ECO:0000250"/>
    <property type="project" value="UniProtKB"/>
</dbReference>
<dbReference type="GO" id="GO:0070530">
    <property type="term" value="F:K63-linked polyubiquitin modification-dependent protein binding"/>
    <property type="evidence" value="ECO:0000250"/>
    <property type="project" value="UniProtKB"/>
</dbReference>
<dbReference type="GO" id="GO:0006508">
    <property type="term" value="P:proteolysis"/>
    <property type="evidence" value="ECO:0007669"/>
    <property type="project" value="UniProtKB-KW"/>
</dbReference>
<dbReference type="InterPro" id="IPR007518">
    <property type="entry name" value="MINDY"/>
</dbReference>
<dbReference type="InterPro" id="IPR033979">
    <property type="entry name" value="MINDY_domain"/>
</dbReference>
<dbReference type="PANTHER" id="PTHR18063">
    <property type="entry name" value="NF-E2 INDUCIBLE PROTEIN"/>
    <property type="match status" value="1"/>
</dbReference>
<dbReference type="PANTHER" id="PTHR18063:SF8">
    <property type="entry name" value="UBIQUITIN CARBOXYL-TERMINAL HYDROLASE MINDY-2"/>
    <property type="match status" value="1"/>
</dbReference>
<dbReference type="Pfam" id="PF04424">
    <property type="entry name" value="MINDY_DUB"/>
    <property type="match status" value="1"/>
</dbReference>
<evidence type="ECO:0000250" key="1">
    <source>
        <dbReference type="UniProtKB" id="Q8N5J2"/>
    </source>
</evidence>
<evidence type="ECO:0000250" key="2">
    <source>
        <dbReference type="UniProtKB" id="Q8NBR6"/>
    </source>
</evidence>
<evidence type="ECO:0000256" key="3">
    <source>
        <dbReference type="SAM" id="MobiDB-lite"/>
    </source>
</evidence>
<evidence type="ECO:0000303" key="4">
    <source>
    </source>
</evidence>
<evidence type="ECO:0000305" key="5"/>
<evidence type="ECO:0007744" key="6">
    <source>
    </source>
</evidence>
<proteinExistence type="evidence at protein level"/>
<organism>
    <name type="scientific">Mus musculus</name>
    <name type="common">Mouse</name>
    <dbReference type="NCBI Taxonomy" id="10090"/>
    <lineage>
        <taxon>Eukaryota</taxon>
        <taxon>Metazoa</taxon>
        <taxon>Chordata</taxon>
        <taxon>Craniata</taxon>
        <taxon>Vertebrata</taxon>
        <taxon>Euteleostomi</taxon>
        <taxon>Mammalia</taxon>
        <taxon>Eutheria</taxon>
        <taxon>Euarchontoglires</taxon>
        <taxon>Glires</taxon>
        <taxon>Rodentia</taxon>
        <taxon>Myomorpha</taxon>
        <taxon>Muroidea</taxon>
        <taxon>Muridae</taxon>
        <taxon>Murinae</taxon>
        <taxon>Mus</taxon>
        <taxon>Mus</taxon>
    </lineage>
</organism>